<organism>
    <name type="scientific">Bacillus cereus (strain ZK / E33L)</name>
    <dbReference type="NCBI Taxonomy" id="288681"/>
    <lineage>
        <taxon>Bacteria</taxon>
        <taxon>Bacillati</taxon>
        <taxon>Bacillota</taxon>
        <taxon>Bacilli</taxon>
        <taxon>Bacillales</taxon>
        <taxon>Bacillaceae</taxon>
        <taxon>Bacillus</taxon>
        <taxon>Bacillus cereus group</taxon>
    </lineage>
</organism>
<protein>
    <recommendedName>
        <fullName evidence="1">Anthranilate phosphoribosyltransferase</fullName>
        <ecNumber evidence="1">2.4.2.18</ecNumber>
    </recommendedName>
</protein>
<keyword id="KW-0028">Amino-acid biosynthesis</keyword>
<keyword id="KW-0057">Aromatic amino acid biosynthesis</keyword>
<keyword id="KW-0328">Glycosyltransferase</keyword>
<keyword id="KW-0460">Magnesium</keyword>
<keyword id="KW-0479">Metal-binding</keyword>
<keyword id="KW-0808">Transferase</keyword>
<keyword id="KW-0822">Tryptophan biosynthesis</keyword>
<name>TRPD_BACCZ</name>
<comment type="function">
    <text evidence="1">Catalyzes the transfer of the phosphoribosyl group of 5-phosphorylribose-1-pyrophosphate (PRPP) to anthranilate to yield N-(5'-phosphoribosyl)-anthranilate (PRA).</text>
</comment>
<comment type="catalytic activity">
    <reaction evidence="1">
        <text>N-(5-phospho-beta-D-ribosyl)anthranilate + diphosphate = 5-phospho-alpha-D-ribose 1-diphosphate + anthranilate</text>
        <dbReference type="Rhea" id="RHEA:11768"/>
        <dbReference type="ChEBI" id="CHEBI:16567"/>
        <dbReference type="ChEBI" id="CHEBI:18277"/>
        <dbReference type="ChEBI" id="CHEBI:33019"/>
        <dbReference type="ChEBI" id="CHEBI:58017"/>
        <dbReference type="EC" id="2.4.2.18"/>
    </reaction>
</comment>
<comment type="cofactor">
    <cofactor evidence="1">
        <name>Mg(2+)</name>
        <dbReference type="ChEBI" id="CHEBI:18420"/>
    </cofactor>
    <text evidence="1">Binds 2 magnesium ions per monomer.</text>
</comment>
<comment type="pathway">
    <text evidence="1">Amino-acid biosynthesis; L-tryptophan biosynthesis; L-tryptophan from chorismate: step 2/5.</text>
</comment>
<comment type="subunit">
    <text evidence="1">Homodimer.</text>
</comment>
<comment type="similarity">
    <text evidence="1">Belongs to the anthranilate phosphoribosyltransferase family.</text>
</comment>
<gene>
    <name evidence="1" type="primary">trpD</name>
    <name type="ordered locus">BCE33L1132</name>
</gene>
<accession>Q63ED0</accession>
<sequence length="341" mass="36978">MNNYLRKLVEGQHLTEEEMYKAGLLLLNENILESEIAAFLVLLKAKGETAEEIYGLVRALREKALPFSNHIQGAMDNCGTGGDGAQTFNISTTSAFVLAGADVKVAKHGNRAVSSKTGSADLLEELGVNISSTPNEIDYLLEHVGIAFLFAPVMHPALKRIMKIRKELNVPTIFNLIGPLTNPVNLETQFVGIYKRDMLLPVAQVLQKLGRKQALVVNGSGFLDEASLQGENHVVILKDNEIVETSIEPKKYGFSIVKNEEIRGGNSKENAKITLGVLSGEKSVYRDTVLFNAGLALFANGKAKTIEEGITLAAHSIDSGKALAKLNLLIAASNEKLERVN</sequence>
<reference key="1">
    <citation type="journal article" date="2006" name="J. Bacteriol.">
        <title>Pathogenomic sequence analysis of Bacillus cereus and Bacillus thuringiensis isolates closely related to Bacillus anthracis.</title>
        <authorList>
            <person name="Han C.S."/>
            <person name="Xie G."/>
            <person name="Challacombe J.F."/>
            <person name="Altherr M.R."/>
            <person name="Bhotika S.S."/>
            <person name="Bruce D."/>
            <person name="Campbell C.S."/>
            <person name="Campbell M.L."/>
            <person name="Chen J."/>
            <person name="Chertkov O."/>
            <person name="Cleland C."/>
            <person name="Dimitrijevic M."/>
            <person name="Doggett N.A."/>
            <person name="Fawcett J.J."/>
            <person name="Glavina T."/>
            <person name="Goodwin L.A."/>
            <person name="Hill K.K."/>
            <person name="Hitchcock P."/>
            <person name="Jackson P.J."/>
            <person name="Keim P."/>
            <person name="Kewalramani A.R."/>
            <person name="Longmire J."/>
            <person name="Lucas S."/>
            <person name="Malfatti S."/>
            <person name="McMurry K."/>
            <person name="Meincke L.J."/>
            <person name="Misra M."/>
            <person name="Moseman B.L."/>
            <person name="Mundt M."/>
            <person name="Munk A.C."/>
            <person name="Okinaka R.T."/>
            <person name="Parson-Quintana B."/>
            <person name="Reilly L.P."/>
            <person name="Richardson P."/>
            <person name="Robinson D.L."/>
            <person name="Rubin E."/>
            <person name="Saunders E."/>
            <person name="Tapia R."/>
            <person name="Tesmer J.G."/>
            <person name="Thayer N."/>
            <person name="Thompson L.S."/>
            <person name="Tice H."/>
            <person name="Ticknor L.O."/>
            <person name="Wills P.L."/>
            <person name="Brettin T.S."/>
            <person name="Gilna P."/>
        </authorList>
    </citation>
    <scope>NUCLEOTIDE SEQUENCE [LARGE SCALE GENOMIC DNA]</scope>
    <source>
        <strain>ZK / E33L</strain>
    </source>
</reference>
<feature type="chain" id="PRO_0000227132" description="Anthranilate phosphoribosyltransferase">
    <location>
        <begin position="1"/>
        <end position="341"/>
    </location>
</feature>
<feature type="binding site" evidence="1">
    <location>
        <position position="79"/>
    </location>
    <ligand>
        <name>5-phospho-alpha-D-ribose 1-diphosphate</name>
        <dbReference type="ChEBI" id="CHEBI:58017"/>
    </ligand>
</feature>
<feature type="binding site" evidence="1">
    <location>
        <position position="79"/>
    </location>
    <ligand>
        <name>anthranilate</name>
        <dbReference type="ChEBI" id="CHEBI:16567"/>
        <label>1</label>
    </ligand>
</feature>
<feature type="binding site" evidence="1">
    <location>
        <begin position="82"/>
        <end position="83"/>
    </location>
    <ligand>
        <name>5-phospho-alpha-D-ribose 1-diphosphate</name>
        <dbReference type="ChEBI" id="CHEBI:58017"/>
    </ligand>
</feature>
<feature type="binding site" evidence="1">
    <location>
        <position position="87"/>
    </location>
    <ligand>
        <name>5-phospho-alpha-D-ribose 1-diphosphate</name>
        <dbReference type="ChEBI" id="CHEBI:58017"/>
    </ligand>
</feature>
<feature type="binding site" evidence="1">
    <location>
        <begin position="89"/>
        <end position="92"/>
    </location>
    <ligand>
        <name>5-phospho-alpha-D-ribose 1-diphosphate</name>
        <dbReference type="ChEBI" id="CHEBI:58017"/>
    </ligand>
</feature>
<feature type="binding site" evidence="1">
    <location>
        <position position="91"/>
    </location>
    <ligand>
        <name>Mg(2+)</name>
        <dbReference type="ChEBI" id="CHEBI:18420"/>
        <label>1</label>
    </ligand>
</feature>
<feature type="binding site" evidence="1">
    <location>
        <begin position="107"/>
        <end position="115"/>
    </location>
    <ligand>
        <name>5-phospho-alpha-D-ribose 1-diphosphate</name>
        <dbReference type="ChEBI" id="CHEBI:58017"/>
    </ligand>
</feature>
<feature type="binding site" evidence="1">
    <location>
        <position position="110"/>
    </location>
    <ligand>
        <name>anthranilate</name>
        <dbReference type="ChEBI" id="CHEBI:16567"/>
        <label>1</label>
    </ligand>
</feature>
<feature type="binding site" evidence="1">
    <location>
        <position position="119"/>
    </location>
    <ligand>
        <name>5-phospho-alpha-D-ribose 1-diphosphate</name>
        <dbReference type="ChEBI" id="CHEBI:58017"/>
    </ligand>
</feature>
<feature type="binding site" evidence="1">
    <location>
        <position position="165"/>
    </location>
    <ligand>
        <name>anthranilate</name>
        <dbReference type="ChEBI" id="CHEBI:16567"/>
        <label>2</label>
    </ligand>
</feature>
<feature type="binding site" evidence="1">
    <location>
        <position position="224"/>
    </location>
    <ligand>
        <name>Mg(2+)</name>
        <dbReference type="ChEBI" id="CHEBI:18420"/>
        <label>2</label>
    </ligand>
</feature>
<feature type="binding site" evidence="1">
    <location>
        <position position="225"/>
    </location>
    <ligand>
        <name>Mg(2+)</name>
        <dbReference type="ChEBI" id="CHEBI:18420"/>
        <label>1</label>
    </ligand>
</feature>
<feature type="binding site" evidence="1">
    <location>
        <position position="225"/>
    </location>
    <ligand>
        <name>Mg(2+)</name>
        <dbReference type="ChEBI" id="CHEBI:18420"/>
        <label>2</label>
    </ligand>
</feature>
<dbReference type="EC" id="2.4.2.18" evidence="1"/>
<dbReference type="EMBL" id="CP000001">
    <property type="protein sequence ID" value="AAU19116.1"/>
    <property type="molecule type" value="Genomic_DNA"/>
</dbReference>
<dbReference type="RefSeq" id="WP_001067340.1">
    <property type="nucleotide sequence ID" value="NC_006274.1"/>
</dbReference>
<dbReference type="SMR" id="Q63ED0"/>
<dbReference type="KEGG" id="bcz:BCE33L1132"/>
<dbReference type="PATRIC" id="fig|288681.22.peg.4432"/>
<dbReference type="UniPathway" id="UPA00035">
    <property type="reaction ID" value="UER00041"/>
</dbReference>
<dbReference type="Proteomes" id="UP000002612">
    <property type="component" value="Chromosome"/>
</dbReference>
<dbReference type="GO" id="GO:0005829">
    <property type="term" value="C:cytosol"/>
    <property type="evidence" value="ECO:0007669"/>
    <property type="project" value="TreeGrafter"/>
</dbReference>
<dbReference type="GO" id="GO:0004048">
    <property type="term" value="F:anthranilate phosphoribosyltransferase activity"/>
    <property type="evidence" value="ECO:0007669"/>
    <property type="project" value="UniProtKB-UniRule"/>
</dbReference>
<dbReference type="GO" id="GO:0000287">
    <property type="term" value="F:magnesium ion binding"/>
    <property type="evidence" value="ECO:0007669"/>
    <property type="project" value="UniProtKB-UniRule"/>
</dbReference>
<dbReference type="GO" id="GO:0000162">
    <property type="term" value="P:L-tryptophan biosynthetic process"/>
    <property type="evidence" value="ECO:0007669"/>
    <property type="project" value="UniProtKB-UniRule"/>
</dbReference>
<dbReference type="FunFam" id="3.40.1030.10:FF:000002">
    <property type="entry name" value="Anthranilate phosphoribosyltransferase"/>
    <property type="match status" value="1"/>
</dbReference>
<dbReference type="Gene3D" id="3.40.1030.10">
    <property type="entry name" value="Nucleoside phosphorylase/phosphoribosyltransferase catalytic domain"/>
    <property type="match status" value="1"/>
</dbReference>
<dbReference type="Gene3D" id="1.20.970.10">
    <property type="entry name" value="Transferase, Pyrimidine Nucleoside Phosphorylase, Chain C"/>
    <property type="match status" value="1"/>
</dbReference>
<dbReference type="HAMAP" id="MF_00211">
    <property type="entry name" value="TrpD"/>
    <property type="match status" value="1"/>
</dbReference>
<dbReference type="InterPro" id="IPR005940">
    <property type="entry name" value="Anthranilate_Pribosyl_Tfrase"/>
</dbReference>
<dbReference type="InterPro" id="IPR000312">
    <property type="entry name" value="Glycosyl_Trfase_fam3"/>
</dbReference>
<dbReference type="InterPro" id="IPR017459">
    <property type="entry name" value="Glycosyl_Trfase_fam3_N_dom"/>
</dbReference>
<dbReference type="InterPro" id="IPR036320">
    <property type="entry name" value="Glycosyl_Trfase_fam3_N_dom_sf"/>
</dbReference>
<dbReference type="InterPro" id="IPR035902">
    <property type="entry name" value="Nuc_phospho_transferase"/>
</dbReference>
<dbReference type="NCBIfam" id="TIGR01245">
    <property type="entry name" value="trpD"/>
    <property type="match status" value="1"/>
</dbReference>
<dbReference type="PANTHER" id="PTHR43285">
    <property type="entry name" value="ANTHRANILATE PHOSPHORIBOSYLTRANSFERASE"/>
    <property type="match status" value="1"/>
</dbReference>
<dbReference type="PANTHER" id="PTHR43285:SF2">
    <property type="entry name" value="ANTHRANILATE PHOSPHORIBOSYLTRANSFERASE"/>
    <property type="match status" value="1"/>
</dbReference>
<dbReference type="Pfam" id="PF02885">
    <property type="entry name" value="Glycos_trans_3N"/>
    <property type="match status" value="1"/>
</dbReference>
<dbReference type="Pfam" id="PF00591">
    <property type="entry name" value="Glycos_transf_3"/>
    <property type="match status" value="1"/>
</dbReference>
<dbReference type="SUPFAM" id="SSF52418">
    <property type="entry name" value="Nucleoside phosphorylase/phosphoribosyltransferase catalytic domain"/>
    <property type="match status" value="1"/>
</dbReference>
<dbReference type="SUPFAM" id="SSF47648">
    <property type="entry name" value="Nucleoside phosphorylase/phosphoribosyltransferase N-terminal domain"/>
    <property type="match status" value="1"/>
</dbReference>
<proteinExistence type="inferred from homology"/>
<evidence type="ECO:0000255" key="1">
    <source>
        <dbReference type="HAMAP-Rule" id="MF_00211"/>
    </source>
</evidence>